<organism>
    <name type="scientific">Clostridium perfringens (strain 13 / Type A)</name>
    <dbReference type="NCBI Taxonomy" id="195102"/>
    <lineage>
        <taxon>Bacteria</taxon>
        <taxon>Bacillati</taxon>
        <taxon>Bacillota</taxon>
        <taxon>Clostridia</taxon>
        <taxon>Eubacteriales</taxon>
        <taxon>Clostridiaceae</taxon>
        <taxon>Clostridium</taxon>
    </lineage>
</organism>
<comment type="function">
    <text evidence="1">Catalyzes the transfer of the enolpyruvyl moiety of phosphoenolpyruvate (PEP) to the 5-hydroxyl of shikimate-3-phosphate (S3P) to produce enolpyruvyl shikimate-3-phosphate and inorganic phosphate.</text>
</comment>
<comment type="catalytic activity">
    <reaction evidence="1">
        <text>3-phosphoshikimate + phosphoenolpyruvate = 5-O-(1-carboxyvinyl)-3-phosphoshikimate + phosphate</text>
        <dbReference type="Rhea" id="RHEA:21256"/>
        <dbReference type="ChEBI" id="CHEBI:43474"/>
        <dbReference type="ChEBI" id="CHEBI:57701"/>
        <dbReference type="ChEBI" id="CHEBI:58702"/>
        <dbReference type="ChEBI" id="CHEBI:145989"/>
        <dbReference type="EC" id="2.5.1.19"/>
    </reaction>
    <physiologicalReaction direction="left-to-right" evidence="1">
        <dbReference type="Rhea" id="RHEA:21257"/>
    </physiologicalReaction>
</comment>
<comment type="pathway">
    <text evidence="1">Metabolic intermediate biosynthesis; chorismate biosynthesis; chorismate from D-erythrose 4-phosphate and phosphoenolpyruvate: step 6/7.</text>
</comment>
<comment type="subunit">
    <text evidence="1">Monomer.</text>
</comment>
<comment type="subcellular location">
    <subcellularLocation>
        <location evidence="1">Cytoplasm</location>
    </subcellularLocation>
</comment>
<comment type="similarity">
    <text evidence="1">Belongs to the EPSP synthase family.</text>
</comment>
<sequence>MKKVIITPSKLRGSVKIPPSKSMAHRAIICASLSKGESVISNIDFSEDIIATMEGMKSLGANIKVEKDKLIINGENILKDSNYKFIDCNESGSTLRFLVPISLIKDNRVNFIGRGNLGKRPLKTYYEIFEEQEIKYSYEEENLDLNIEGSLKGGEFKVKGNISSQFISGLLFTLPLLKDDSKIIITTELESKGYIDLTLDMIEKFGVTIKNNNYREFLIKGNQSYKPMNYKVEGDYSQAAFYFSAGALGSEINCLDLDLSSYQGDKECIEILEGMGARLIESQERSLSIIHGDLNGTIIDASQCPDIIPVLTVVAALSKGETRIINGERLRIKECDRLNAICTELNKLGADIKELKDGLIINGVKDLIGGEVYSHKDHRIAMSLAIASTRCKKEVIIKEPDCVKKSYPGFWEDFKSLGGILREE</sequence>
<gene>
    <name evidence="1" type="primary">aroA</name>
    <name type="ordered locus">CPE0696</name>
</gene>
<keyword id="KW-0028">Amino-acid biosynthesis</keyword>
<keyword id="KW-0057">Aromatic amino acid biosynthesis</keyword>
<keyword id="KW-0963">Cytoplasm</keyword>
<keyword id="KW-1185">Reference proteome</keyword>
<keyword id="KW-0808">Transferase</keyword>
<evidence type="ECO:0000255" key="1">
    <source>
        <dbReference type="HAMAP-Rule" id="MF_00210"/>
    </source>
</evidence>
<proteinExistence type="inferred from homology"/>
<feature type="chain" id="PRO_0000088248" description="3-phosphoshikimate 1-carboxyvinyltransferase">
    <location>
        <begin position="1"/>
        <end position="424"/>
    </location>
</feature>
<feature type="active site" description="Proton acceptor" evidence="1">
    <location>
        <position position="306"/>
    </location>
</feature>
<feature type="binding site" evidence="1">
    <location>
        <position position="21"/>
    </location>
    <ligand>
        <name>3-phosphoshikimate</name>
        <dbReference type="ChEBI" id="CHEBI:145989"/>
    </ligand>
</feature>
<feature type="binding site" evidence="1">
    <location>
        <position position="21"/>
    </location>
    <ligand>
        <name>phosphoenolpyruvate</name>
        <dbReference type="ChEBI" id="CHEBI:58702"/>
    </ligand>
</feature>
<feature type="binding site" evidence="1">
    <location>
        <position position="22"/>
    </location>
    <ligand>
        <name>3-phosphoshikimate</name>
        <dbReference type="ChEBI" id="CHEBI:145989"/>
    </ligand>
</feature>
<feature type="binding site" evidence="1">
    <location>
        <position position="26"/>
    </location>
    <ligand>
        <name>3-phosphoshikimate</name>
        <dbReference type="ChEBI" id="CHEBI:145989"/>
    </ligand>
</feature>
<feature type="binding site" evidence="1">
    <location>
        <position position="92"/>
    </location>
    <ligand>
        <name>phosphoenolpyruvate</name>
        <dbReference type="ChEBI" id="CHEBI:58702"/>
    </ligand>
</feature>
<feature type="binding site" evidence="1">
    <location>
        <position position="120"/>
    </location>
    <ligand>
        <name>phosphoenolpyruvate</name>
        <dbReference type="ChEBI" id="CHEBI:58702"/>
    </ligand>
</feature>
<feature type="binding site" evidence="1">
    <location>
        <position position="163"/>
    </location>
    <ligand>
        <name>3-phosphoshikimate</name>
        <dbReference type="ChEBI" id="CHEBI:145989"/>
    </ligand>
</feature>
<feature type="binding site" evidence="1">
    <location>
        <position position="164"/>
    </location>
    <ligand>
        <name>3-phosphoshikimate</name>
        <dbReference type="ChEBI" id="CHEBI:145989"/>
    </ligand>
</feature>
<feature type="binding site" evidence="1">
    <location>
        <position position="165"/>
    </location>
    <ligand>
        <name>3-phosphoshikimate</name>
        <dbReference type="ChEBI" id="CHEBI:145989"/>
    </ligand>
</feature>
<feature type="binding site" evidence="1">
    <location>
        <position position="165"/>
    </location>
    <ligand>
        <name>phosphoenolpyruvate</name>
        <dbReference type="ChEBI" id="CHEBI:58702"/>
    </ligand>
</feature>
<feature type="binding site" evidence="1">
    <location>
        <position position="191"/>
    </location>
    <ligand>
        <name>3-phosphoshikimate</name>
        <dbReference type="ChEBI" id="CHEBI:145989"/>
    </ligand>
</feature>
<feature type="binding site" evidence="1">
    <location>
        <position position="306"/>
    </location>
    <ligand>
        <name>3-phosphoshikimate</name>
        <dbReference type="ChEBI" id="CHEBI:145989"/>
    </ligand>
</feature>
<feature type="binding site" evidence="1">
    <location>
        <position position="333"/>
    </location>
    <ligand>
        <name>3-phosphoshikimate</name>
        <dbReference type="ChEBI" id="CHEBI:145989"/>
    </ligand>
</feature>
<feature type="binding site" evidence="1">
    <location>
        <position position="337"/>
    </location>
    <ligand>
        <name>phosphoenolpyruvate</name>
        <dbReference type="ChEBI" id="CHEBI:58702"/>
    </ligand>
</feature>
<feature type="binding site" evidence="1">
    <location>
        <position position="379"/>
    </location>
    <ligand>
        <name>phosphoenolpyruvate</name>
        <dbReference type="ChEBI" id="CHEBI:58702"/>
    </ligand>
</feature>
<feature type="binding site" evidence="1">
    <location>
        <position position="405"/>
    </location>
    <ligand>
        <name>phosphoenolpyruvate</name>
        <dbReference type="ChEBI" id="CHEBI:58702"/>
    </ligand>
</feature>
<name>AROA_CLOPE</name>
<reference key="1">
    <citation type="journal article" date="2002" name="Proc. Natl. Acad. Sci. U.S.A.">
        <title>Complete genome sequence of Clostridium perfringens, an anaerobic flesh-eater.</title>
        <authorList>
            <person name="Shimizu T."/>
            <person name="Ohtani K."/>
            <person name="Hirakawa H."/>
            <person name="Ohshima K."/>
            <person name="Yamashita A."/>
            <person name="Shiba T."/>
            <person name="Ogasawara N."/>
            <person name="Hattori M."/>
            <person name="Kuhara S."/>
            <person name="Hayashi H."/>
        </authorList>
    </citation>
    <scope>NUCLEOTIDE SEQUENCE [LARGE SCALE GENOMIC DNA]</scope>
    <source>
        <strain>13 / Type A</strain>
    </source>
</reference>
<dbReference type="EC" id="2.5.1.19" evidence="1"/>
<dbReference type="EMBL" id="BA000016">
    <property type="protein sequence ID" value="BAB80402.1"/>
    <property type="molecule type" value="Genomic_DNA"/>
</dbReference>
<dbReference type="RefSeq" id="WP_011009978.1">
    <property type="nucleotide sequence ID" value="NC_003366.1"/>
</dbReference>
<dbReference type="SMR" id="Q8XMJ2"/>
<dbReference type="STRING" id="195102.gene:10489958"/>
<dbReference type="KEGG" id="cpe:CPE0696"/>
<dbReference type="HOGENOM" id="CLU_024321_0_0_9"/>
<dbReference type="UniPathway" id="UPA00053">
    <property type="reaction ID" value="UER00089"/>
</dbReference>
<dbReference type="Proteomes" id="UP000000818">
    <property type="component" value="Chromosome"/>
</dbReference>
<dbReference type="GO" id="GO:0005737">
    <property type="term" value="C:cytoplasm"/>
    <property type="evidence" value="ECO:0007669"/>
    <property type="project" value="UniProtKB-SubCell"/>
</dbReference>
<dbReference type="GO" id="GO:0003866">
    <property type="term" value="F:3-phosphoshikimate 1-carboxyvinyltransferase activity"/>
    <property type="evidence" value="ECO:0007669"/>
    <property type="project" value="UniProtKB-UniRule"/>
</dbReference>
<dbReference type="GO" id="GO:0008652">
    <property type="term" value="P:amino acid biosynthetic process"/>
    <property type="evidence" value="ECO:0007669"/>
    <property type="project" value="UniProtKB-KW"/>
</dbReference>
<dbReference type="GO" id="GO:0009073">
    <property type="term" value="P:aromatic amino acid family biosynthetic process"/>
    <property type="evidence" value="ECO:0007669"/>
    <property type="project" value="UniProtKB-KW"/>
</dbReference>
<dbReference type="GO" id="GO:0009423">
    <property type="term" value="P:chorismate biosynthetic process"/>
    <property type="evidence" value="ECO:0007669"/>
    <property type="project" value="UniProtKB-UniRule"/>
</dbReference>
<dbReference type="CDD" id="cd01556">
    <property type="entry name" value="EPSP_synthase"/>
    <property type="match status" value="1"/>
</dbReference>
<dbReference type="Gene3D" id="3.65.10.10">
    <property type="entry name" value="Enolpyruvate transferase domain"/>
    <property type="match status" value="2"/>
</dbReference>
<dbReference type="HAMAP" id="MF_00210">
    <property type="entry name" value="EPSP_synth"/>
    <property type="match status" value="1"/>
</dbReference>
<dbReference type="InterPro" id="IPR001986">
    <property type="entry name" value="Enolpyruvate_Tfrase_dom"/>
</dbReference>
<dbReference type="InterPro" id="IPR036968">
    <property type="entry name" value="Enolpyruvate_Tfrase_sf"/>
</dbReference>
<dbReference type="InterPro" id="IPR006264">
    <property type="entry name" value="EPSP_synthase"/>
</dbReference>
<dbReference type="InterPro" id="IPR023193">
    <property type="entry name" value="EPSP_synthase_CS"/>
</dbReference>
<dbReference type="InterPro" id="IPR013792">
    <property type="entry name" value="RNA3'P_cycl/enolpyr_Trfase_a/b"/>
</dbReference>
<dbReference type="NCBIfam" id="TIGR01356">
    <property type="entry name" value="aroA"/>
    <property type="match status" value="1"/>
</dbReference>
<dbReference type="PANTHER" id="PTHR21090">
    <property type="entry name" value="AROM/DEHYDROQUINATE SYNTHASE"/>
    <property type="match status" value="1"/>
</dbReference>
<dbReference type="PANTHER" id="PTHR21090:SF5">
    <property type="entry name" value="PENTAFUNCTIONAL AROM POLYPEPTIDE"/>
    <property type="match status" value="1"/>
</dbReference>
<dbReference type="Pfam" id="PF00275">
    <property type="entry name" value="EPSP_synthase"/>
    <property type="match status" value="1"/>
</dbReference>
<dbReference type="PIRSF" id="PIRSF000505">
    <property type="entry name" value="EPSPS"/>
    <property type="match status" value="1"/>
</dbReference>
<dbReference type="SUPFAM" id="SSF55205">
    <property type="entry name" value="EPT/RTPC-like"/>
    <property type="match status" value="1"/>
</dbReference>
<dbReference type="PROSITE" id="PS00885">
    <property type="entry name" value="EPSP_SYNTHASE_2"/>
    <property type="match status" value="1"/>
</dbReference>
<protein>
    <recommendedName>
        <fullName evidence="1">3-phosphoshikimate 1-carboxyvinyltransferase</fullName>
        <ecNumber evidence="1">2.5.1.19</ecNumber>
    </recommendedName>
    <alternativeName>
        <fullName evidence="1">5-enolpyruvylshikimate-3-phosphate synthase</fullName>
        <shortName evidence="1">EPSP synthase</shortName>
        <shortName evidence="1">EPSPS</shortName>
    </alternativeName>
</protein>
<accession>Q8XMJ2</accession>